<accession>A7NBA0</accession>
<comment type="function">
    <text evidence="1">Catalyzes the reversible conversion of ribose-5-phosphate to ribulose 5-phosphate.</text>
</comment>
<comment type="catalytic activity">
    <reaction evidence="1">
        <text>aldehydo-D-ribose 5-phosphate = D-ribulose 5-phosphate</text>
        <dbReference type="Rhea" id="RHEA:14657"/>
        <dbReference type="ChEBI" id="CHEBI:58121"/>
        <dbReference type="ChEBI" id="CHEBI:58273"/>
        <dbReference type="EC" id="5.3.1.6"/>
    </reaction>
</comment>
<comment type="pathway">
    <text evidence="1">Carbohydrate degradation; pentose phosphate pathway; D-ribose 5-phosphate from D-ribulose 5-phosphate (non-oxidative stage): step 1/1.</text>
</comment>
<comment type="subunit">
    <text evidence="1">Homodimer.</text>
</comment>
<comment type="similarity">
    <text evidence="1">Belongs to the ribose 5-phosphate isomerase family.</text>
</comment>
<dbReference type="EC" id="5.3.1.6" evidence="1"/>
<dbReference type="EMBL" id="CP000803">
    <property type="protein sequence ID" value="ABU61253.1"/>
    <property type="molecule type" value="Genomic_DNA"/>
</dbReference>
<dbReference type="RefSeq" id="WP_003015241.1">
    <property type="nucleotide sequence ID" value="NC_009749.1"/>
</dbReference>
<dbReference type="SMR" id="A7NBA0"/>
<dbReference type="KEGG" id="fta:FTA_0777"/>
<dbReference type="HOGENOM" id="CLU_056590_1_1_6"/>
<dbReference type="UniPathway" id="UPA00115">
    <property type="reaction ID" value="UER00412"/>
</dbReference>
<dbReference type="GO" id="GO:0005829">
    <property type="term" value="C:cytosol"/>
    <property type="evidence" value="ECO:0007669"/>
    <property type="project" value="TreeGrafter"/>
</dbReference>
<dbReference type="GO" id="GO:0004751">
    <property type="term" value="F:ribose-5-phosphate isomerase activity"/>
    <property type="evidence" value="ECO:0007669"/>
    <property type="project" value="UniProtKB-UniRule"/>
</dbReference>
<dbReference type="GO" id="GO:0006014">
    <property type="term" value="P:D-ribose metabolic process"/>
    <property type="evidence" value="ECO:0007669"/>
    <property type="project" value="TreeGrafter"/>
</dbReference>
<dbReference type="GO" id="GO:0009052">
    <property type="term" value="P:pentose-phosphate shunt, non-oxidative branch"/>
    <property type="evidence" value="ECO:0007669"/>
    <property type="project" value="UniProtKB-UniRule"/>
</dbReference>
<dbReference type="CDD" id="cd01398">
    <property type="entry name" value="RPI_A"/>
    <property type="match status" value="1"/>
</dbReference>
<dbReference type="FunFam" id="3.30.70.260:FF:000004">
    <property type="entry name" value="Ribose-5-phosphate isomerase A"/>
    <property type="match status" value="1"/>
</dbReference>
<dbReference type="FunFam" id="3.40.50.1360:FF:000001">
    <property type="entry name" value="Ribose-5-phosphate isomerase A"/>
    <property type="match status" value="1"/>
</dbReference>
<dbReference type="Gene3D" id="3.30.70.260">
    <property type="match status" value="1"/>
</dbReference>
<dbReference type="Gene3D" id="3.40.50.1360">
    <property type="match status" value="1"/>
</dbReference>
<dbReference type="HAMAP" id="MF_00170">
    <property type="entry name" value="Rib_5P_isom_A"/>
    <property type="match status" value="1"/>
</dbReference>
<dbReference type="InterPro" id="IPR037171">
    <property type="entry name" value="NagB/RpiA_transferase-like"/>
</dbReference>
<dbReference type="InterPro" id="IPR020672">
    <property type="entry name" value="Ribose5P_isomerase_typA_subgr"/>
</dbReference>
<dbReference type="InterPro" id="IPR004788">
    <property type="entry name" value="Ribose5P_isomerase_type_A"/>
</dbReference>
<dbReference type="NCBIfam" id="NF001924">
    <property type="entry name" value="PRK00702.1"/>
    <property type="match status" value="1"/>
</dbReference>
<dbReference type="NCBIfam" id="TIGR00021">
    <property type="entry name" value="rpiA"/>
    <property type="match status" value="1"/>
</dbReference>
<dbReference type="PANTHER" id="PTHR11934">
    <property type="entry name" value="RIBOSE-5-PHOSPHATE ISOMERASE"/>
    <property type="match status" value="1"/>
</dbReference>
<dbReference type="PANTHER" id="PTHR11934:SF0">
    <property type="entry name" value="RIBOSE-5-PHOSPHATE ISOMERASE"/>
    <property type="match status" value="1"/>
</dbReference>
<dbReference type="Pfam" id="PF06026">
    <property type="entry name" value="Rib_5-P_isom_A"/>
    <property type="match status" value="1"/>
</dbReference>
<dbReference type="SUPFAM" id="SSF75445">
    <property type="entry name" value="D-ribose-5-phosphate isomerase (RpiA), lid domain"/>
    <property type="match status" value="1"/>
</dbReference>
<dbReference type="SUPFAM" id="SSF100950">
    <property type="entry name" value="NagB/RpiA/CoA transferase-like"/>
    <property type="match status" value="1"/>
</dbReference>
<keyword id="KW-0413">Isomerase</keyword>
<reference key="1">
    <citation type="journal article" date="2009" name="PLoS ONE">
        <title>Complete genome sequence of Francisella tularensis subspecies holarctica FTNF002-00.</title>
        <authorList>
            <person name="Barabote R.D."/>
            <person name="Xie G."/>
            <person name="Brettin T.S."/>
            <person name="Hinrichs S.H."/>
            <person name="Fey P.D."/>
            <person name="Jay J.J."/>
            <person name="Engle J.L."/>
            <person name="Godbole S.D."/>
            <person name="Noronha J.M."/>
            <person name="Scheuermann R.H."/>
            <person name="Zhou L.W."/>
            <person name="Lion C."/>
            <person name="Dempsey M.P."/>
        </authorList>
    </citation>
    <scope>NUCLEOTIDE SEQUENCE [LARGE SCALE GENOMIC DNA]</scope>
    <source>
        <strain>FTNF002-00 / FTA</strain>
    </source>
</reference>
<proteinExistence type="inferred from homology"/>
<protein>
    <recommendedName>
        <fullName evidence="1">Ribose-5-phosphate isomerase A</fullName>
        <ecNumber evidence="1">5.3.1.6</ecNumber>
    </recommendedName>
    <alternativeName>
        <fullName evidence="1">Phosphoriboisomerase A</fullName>
        <shortName evidence="1">PRI</shortName>
    </alternativeName>
</protein>
<name>RPIA_FRATF</name>
<evidence type="ECO:0000255" key="1">
    <source>
        <dbReference type="HAMAP-Rule" id="MF_00170"/>
    </source>
</evidence>
<organism>
    <name type="scientific">Francisella tularensis subsp. holarctica (strain FTNF002-00 / FTA)</name>
    <dbReference type="NCBI Taxonomy" id="458234"/>
    <lineage>
        <taxon>Bacteria</taxon>
        <taxon>Pseudomonadati</taxon>
        <taxon>Pseudomonadota</taxon>
        <taxon>Gammaproteobacteria</taxon>
        <taxon>Thiotrichales</taxon>
        <taxon>Francisellaceae</taxon>
        <taxon>Francisella</taxon>
    </lineage>
</organism>
<sequence>MFFNKKNNQDELKKLAATEAAKSITTEITLGVGTGSTVGFLIEELVNYRDKIKTVVSSSEDSTRKLKALGFDVVDLNYAGEIDLYIDGADECNNHKELIKGGGAALTREKICVAAAKKFICIIDESKKVNTLGNFPLPIEVIPMARSYIARQIVKLGGQPVYREQTITDNGNVILDVYNLKIDNPLKLETELNQITGVVTNGIFALKPADTVIMATKDSNIVVL</sequence>
<gene>
    <name evidence="1" type="primary">rpiA</name>
    <name type="ordered locus">FTA_0777</name>
</gene>
<feature type="chain" id="PRO_1000016923" description="Ribose-5-phosphate isomerase A">
    <location>
        <begin position="1"/>
        <end position="224"/>
    </location>
</feature>
<feature type="active site" description="Proton acceptor" evidence="1">
    <location>
        <position position="109"/>
    </location>
</feature>
<feature type="binding site" evidence="1">
    <location>
        <begin position="34"/>
        <end position="37"/>
    </location>
    <ligand>
        <name>substrate</name>
    </ligand>
</feature>
<feature type="binding site" evidence="1">
    <location>
        <begin position="87"/>
        <end position="90"/>
    </location>
    <ligand>
        <name>substrate</name>
    </ligand>
</feature>
<feature type="binding site" evidence="1">
    <location>
        <begin position="100"/>
        <end position="103"/>
    </location>
    <ligand>
        <name>substrate</name>
    </ligand>
</feature>
<feature type="binding site" evidence="1">
    <location>
        <position position="127"/>
    </location>
    <ligand>
        <name>substrate</name>
    </ligand>
</feature>